<keyword id="KW-0007">Acetylation</keyword>
<keyword id="KW-0067">ATP-binding</keyword>
<keyword id="KW-0436">Ligase</keyword>
<keyword id="KW-0460">Magnesium</keyword>
<keyword id="KW-0479">Metal-binding</keyword>
<keyword id="KW-0547">Nucleotide-binding</keyword>
<reference key="1">
    <citation type="journal article" date="2001" name="Nature">
        <title>Complete genome sequence of a multiple drug resistant Salmonella enterica serovar Typhi CT18.</title>
        <authorList>
            <person name="Parkhill J."/>
            <person name="Dougan G."/>
            <person name="James K.D."/>
            <person name="Thomson N.R."/>
            <person name="Pickard D."/>
            <person name="Wain J."/>
            <person name="Churcher C.M."/>
            <person name="Mungall K.L."/>
            <person name="Bentley S.D."/>
            <person name="Holden M.T.G."/>
            <person name="Sebaihia M."/>
            <person name="Baker S."/>
            <person name="Basham D."/>
            <person name="Brooks K."/>
            <person name="Chillingworth T."/>
            <person name="Connerton P."/>
            <person name="Cronin A."/>
            <person name="Davis P."/>
            <person name="Davies R.M."/>
            <person name="Dowd L."/>
            <person name="White N."/>
            <person name="Farrar J."/>
            <person name="Feltwell T."/>
            <person name="Hamlin N."/>
            <person name="Haque A."/>
            <person name="Hien T.T."/>
            <person name="Holroyd S."/>
            <person name="Jagels K."/>
            <person name="Krogh A."/>
            <person name="Larsen T.S."/>
            <person name="Leather S."/>
            <person name="Moule S."/>
            <person name="O'Gaora P."/>
            <person name="Parry C."/>
            <person name="Quail M.A."/>
            <person name="Rutherford K.M."/>
            <person name="Simmonds M."/>
            <person name="Skelton J."/>
            <person name="Stevens K."/>
            <person name="Whitehead S."/>
            <person name="Barrell B.G."/>
        </authorList>
    </citation>
    <scope>NUCLEOTIDE SEQUENCE [LARGE SCALE GENOMIC DNA]</scope>
    <source>
        <strain>CT18</strain>
    </source>
</reference>
<reference key="2">
    <citation type="journal article" date="2003" name="J. Bacteriol.">
        <title>Comparative genomics of Salmonella enterica serovar Typhi strains Ty2 and CT18.</title>
        <authorList>
            <person name="Deng W."/>
            <person name="Liou S.-R."/>
            <person name="Plunkett G. III"/>
            <person name="Mayhew G.F."/>
            <person name="Rose D.J."/>
            <person name="Burland V."/>
            <person name="Kodoyianni V."/>
            <person name="Schwartz D.C."/>
            <person name="Blattner F.R."/>
        </authorList>
    </citation>
    <scope>NUCLEOTIDE SEQUENCE [LARGE SCALE GENOMIC DNA]</scope>
    <source>
        <strain>ATCC 700931 / Ty2</strain>
    </source>
</reference>
<sequence>MSQTHKHAIPANIADRCLINPEQYETKYKQSINDPDTFWGEQGKILDWITPYQKVKNTSFAPGNVSIKWYEDGTLNLAANCLDRHLQENGDRTAIIWEGDDASQSKHISYRELHRDVCRFANTLLDLGIKKGDVVAIYMPMVPEAAVAMLACARIGAVHSVIFGGFSPEAIAGRIIDSSSRLVITADEGVRAGRSIPLKKNVDDALKNPNVTSVEHVIVLKRTGNDIDWQEGRDLWWRDLIEKASPEHQPEAMNAEDPLFILYTSGSTGKPKGVLHTTGGYLVYAATTFKYVFDYHPGDIYWCTADVGWVTGHSYLLYGPLACGATTLMFEGVPNWPTPARMCQVVDKHQVNILYTAPTAIRALMAEGDKAIEGTDRSSLRILGSVGEPINPEAWEWYWKKIGKEKCPVVDTWWQTETGGFMITPLPGAIELKAGSATRPFFGVQPALVDNEGHPQEGATEGNLVITDSWPGQARTLFGDHERFEQTYFSTFKNMYFSGDGARRDEDGYYWITGRVDDVLNVSGHRLGTAEIESALVAHPKIAEAAVVGIPHAIKGQAIYAYVTLNHGEEPSPELYAEVRNWVRKEIGPLATPDVLHWTDSLPKTRSGKIMRRILRKIAAGDTSNLGDTSTLADPGVVEKLLEEKQAIAMPS</sequence>
<protein>
    <recommendedName>
        <fullName evidence="1">Acetyl-coenzyme A synthetase</fullName>
        <shortName evidence="1">AcCoA synthetase</shortName>
        <shortName evidence="1">Acs</shortName>
        <ecNumber evidence="1">6.2.1.1</ecNumber>
    </recommendedName>
    <alternativeName>
        <fullName evidence="1">Acetate--CoA ligase</fullName>
    </alternativeName>
    <alternativeName>
        <fullName evidence="1">Acyl-activating enzyme</fullName>
    </alternativeName>
</protein>
<organism>
    <name type="scientific">Salmonella typhi</name>
    <dbReference type="NCBI Taxonomy" id="90370"/>
    <lineage>
        <taxon>Bacteria</taxon>
        <taxon>Pseudomonadati</taxon>
        <taxon>Pseudomonadota</taxon>
        <taxon>Gammaproteobacteria</taxon>
        <taxon>Enterobacterales</taxon>
        <taxon>Enterobacteriaceae</taxon>
        <taxon>Salmonella</taxon>
    </lineage>
</organism>
<gene>
    <name evidence="1" type="primary">acs</name>
    <name type="ordered locus">STY4473</name>
    <name type="ordered locus">t4181</name>
</gene>
<accession>Q8Z1R0</accession>
<proteinExistence type="inferred from homology"/>
<evidence type="ECO:0000255" key="1">
    <source>
        <dbReference type="HAMAP-Rule" id="MF_01123"/>
    </source>
</evidence>
<feature type="chain" id="PRO_0000208385" description="Acetyl-coenzyme A synthetase">
    <location>
        <begin position="1"/>
        <end position="652"/>
    </location>
</feature>
<feature type="binding site" evidence="1">
    <location>
        <begin position="191"/>
        <end position="194"/>
    </location>
    <ligand>
        <name>CoA</name>
        <dbReference type="ChEBI" id="CHEBI:57287"/>
    </ligand>
</feature>
<feature type="binding site" evidence="1">
    <location>
        <position position="311"/>
    </location>
    <ligand>
        <name>CoA</name>
        <dbReference type="ChEBI" id="CHEBI:57287"/>
    </ligand>
</feature>
<feature type="binding site" evidence="1">
    <location>
        <position position="335"/>
    </location>
    <ligand>
        <name>CoA</name>
        <dbReference type="ChEBI" id="CHEBI:57287"/>
    </ligand>
</feature>
<feature type="binding site" evidence="1">
    <location>
        <begin position="387"/>
        <end position="389"/>
    </location>
    <ligand>
        <name>ATP</name>
        <dbReference type="ChEBI" id="CHEBI:30616"/>
    </ligand>
</feature>
<feature type="binding site" evidence="1">
    <location>
        <begin position="411"/>
        <end position="416"/>
    </location>
    <ligand>
        <name>ATP</name>
        <dbReference type="ChEBI" id="CHEBI:30616"/>
    </ligand>
</feature>
<feature type="binding site" evidence="1">
    <location>
        <position position="500"/>
    </location>
    <ligand>
        <name>ATP</name>
        <dbReference type="ChEBI" id="CHEBI:30616"/>
    </ligand>
</feature>
<feature type="binding site" evidence="1">
    <location>
        <position position="515"/>
    </location>
    <ligand>
        <name>ATP</name>
        <dbReference type="ChEBI" id="CHEBI:30616"/>
    </ligand>
</feature>
<feature type="binding site" evidence="1">
    <location>
        <position position="523"/>
    </location>
    <ligand>
        <name>CoA</name>
        <dbReference type="ChEBI" id="CHEBI:57287"/>
    </ligand>
</feature>
<feature type="binding site" evidence="1">
    <location>
        <position position="526"/>
    </location>
    <ligand>
        <name>ATP</name>
        <dbReference type="ChEBI" id="CHEBI:30616"/>
    </ligand>
</feature>
<feature type="binding site" evidence="1">
    <location>
        <position position="537"/>
    </location>
    <ligand>
        <name>Mg(2+)</name>
        <dbReference type="ChEBI" id="CHEBI:18420"/>
    </ligand>
</feature>
<feature type="binding site" evidence="1">
    <location>
        <position position="539"/>
    </location>
    <ligand>
        <name>Mg(2+)</name>
        <dbReference type="ChEBI" id="CHEBI:18420"/>
    </ligand>
</feature>
<feature type="binding site" evidence="1">
    <location>
        <position position="542"/>
    </location>
    <ligand>
        <name>Mg(2+)</name>
        <dbReference type="ChEBI" id="CHEBI:18420"/>
    </ligand>
</feature>
<feature type="binding site" evidence="1">
    <location>
        <position position="584"/>
    </location>
    <ligand>
        <name>CoA</name>
        <dbReference type="ChEBI" id="CHEBI:57287"/>
    </ligand>
</feature>
<feature type="modified residue" description="N6-acetyllysine" evidence="1">
    <location>
        <position position="609"/>
    </location>
</feature>
<comment type="function">
    <text evidence="1">Catalyzes the conversion of acetate into acetyl-CoA (AcCoA), an essential intermediate at the junction of anabolic and catabolic pathways. Acs undergoes a two-step reaction. In the first half reaction, Acs combines acetate with ATP to form acetyl-adenylate (AcAMP) intermediate. In the second half reaction, it can then transfer the acetyl group from AcAMP to the sulfhydryl group of CoA, forming the product AcCoA.</text>
</comment>
<comment type="function">
    <text evidence="1">Enables the cell to use acetate during aerobic growth to generate energy via the TCA cycle, and biosynthetic compounds via the glyoxylate shunt. Acetylates CheY, the response regulator involved in flagellar movement and chemotaxis.</text>
</comment>
<comment type="catalytic activity">
    <reaction evidence="1">
        <text>acetate + ATP + CoA = acetyl-CoA + AMP + diphosphate</text>
        <dbReference type="Rhea" id="RHEA:23176"/>
        <dbReference type="ChEBI" id="CHEBI:30089"/>
        <dbReference type="ChEBI" id="CHEBI:30616"/>
        <dbReference type="ChEBI" id="CHEBI:33019"/>
        <dbReference type="ChEBI" id="CHEBI:57287"/>
        <dbReference type="ChEBI" id="CHEBI:57288"/>
        <dbReference type="ChEBI" id="CHEBI:456215"/>
        <dbReference type="EC" id="6.2.1.1"/>
    </reaction>
</comment>
<comment type="cofactor">
    <cofactor evidence="1">
        <name>Mg(2+)</name>
        <dbReference type="ChEBI" id="CHEBI:18420"/>
    </cofactor>
</comment>
<comment type="PTM">
    <text evidence="1">Acetylated. Deacetylation by the SIR2-homolog deacetylase activates the enzyme.</text>
</comment>
<comment type="similarity">
    <text evidence="1">Belongs to the ATP-dependent AMP-binding enzyme family.</text>
</comment>
<name>ACSA_SALTI</name>
<dbReference type="EC" id="6.2.1.1" evidence="1"/>
<dbReference type="EMBL" id="AL513382">
    <property type="protein sequence ID" value="CAD09259.1"/>
    <property type="molecule type" value="Genomic_DNA"/>
</dbReference>
<dbReference type="EMBL" id="AE014613">
    <property type="protein sequence ID" value="AAO71645.1"/>
    <property type="molecule type" value="Genomic_DNA"/>
</dbReference>
<dbReference type="RefSeq" id="NP_458573.1">
    <property type="nucleotide sequence ID" value="NC_003198.1"/>
</dbReference>
<dbReference type="RefSeq" id="WP_000083869.1">
    <property type="nucleotide sequence ID" value="NZ_WSUR01000035.1"/>
</dbReference>
<dbReference type="SMR" id="Q8Z1R0"/>
<dbReference type="STRING" id="220341.gene:17588303"/>
<dbReference type="KEGG" id="stt:t4181"/>
<dbReference type="KEGG" id="sty:STY4473"/>
<dbReference type="PATRIC" id="fig|220341.7.peg.4575"/>
<dbReference type="eggNOG" id="COG0365">
    <property type="taxonomic scope" value="Bacteria"/>
</dbReference>
<dbReference type="HOGENOM" id="CLU_000022_3_6_6"/>
<dbReference type="OMA" id="INVSYNC"/>
<dbReference type="OrthoDB" id="9803968at2"/>
<dbReference type="Proteomes" id="UP000000541">
    <property type="component" value="Chromosome"/>
</dbReference>
<dbReference type="Proteomes" id="UP000002670">
    <property type="component" value="Chromosome"/>
</dbReference>
<dbReference type="GO" id="GO:0005829">
    <property type="term" value="C:cytosol"/>
    <property type="evidence" value="ECO:0007669"/>
    <property type="project" value="TreeGrafter"/>
</dbReference>
<dbReference type="GO" id="GO:0003987">
    <property type="term" value="F:acetate-CoA ligase activity"/>
    <property type="evidence" value="ECO:0007669"/>
    <property type="project" value="UniProtKB-UniRule"/>
</dbReference>
<dbReference type="GO" id="GO:0016208">
    <property type="term" value="F:AMP binding"/>
    <property type="evidence" value="ECO:0007669"/>
    <property type="project" value="InterPro"/>
</dbReference>
<dbReference type="GO" id="GO:0005524">
    <property type="term" value="F:ATP binding"/>
    <property type="evidence" value="ECO:0007669"/>
    <property type="project" value="UniProtKB-KW"/>
</dbReference>
<dbReference type="GO" id="GO:0046872">
    <property type="term" value="F:metal ion binding"/>
    <property type="evidence" value="ECO:0007669"/>
    <property type="project" value="UniProtKB-KW"/>
</dbReference>
<dbReference type="GO" id="GO:0019427">
    <property type="term" value="P:acetyl-CoA biosynthetic process from acetate"/>
    <property type="evidence" value="ECO:0007669"/>
    <property type="project" value="UniProtKB-UniRule"/>
</dbReference>
<dbReference type="GO" id="GO:0006935">
    <property type="term" value="P:chemotaxis"/>
    <property type="evidence" value="ECO:0007669"/>
    <property type="project" value="UniProtKB-UniRule"/>
</dbReference>
<dbReference type="CDD" id="cd05966">
    <property type="entry name" value="ACS"/>
    <property type="match status" value="1"/>
</dbReference>
<dbReference type="FunFam" id="3.30.300.30:FF:000004">
    <property type="entry name" value="Acetyl-coenzyme A synthetase"/>
    <property type="match status" value="1"/>
</dbReference>
<dbReference type="FunFam" id="3.40.50.12780:FF:000001">
    <property type="entry name" value="Acetyl-coenzyme A synthetase"/>
    <property type="match status" value="1"/>
</dbReference>
<dbReference type="Gene3D" id="3.30.300.30">
    <property type="match status" value="1"/>
</dbReference>
<dbReference type="Gene3D" id="3.40.50.12780">
    <property type="entry name" value="N-terminal domain of ligase-like"/>
    <property type="match status" value="1"/>
</dbReference>
<dbReference type="HAMAP" id="MF_01123">
    <property type="entry name" value="Ac_CoA_synth"/>
    <property type="match status" value="1"/>
</dbReference>
<dbReference type="InterPro" id="IPR011904">
    <property type="entry name" value="Ac_CoA_lig"/>
</dbReference>
<dbReference type="InterPro" id="IPR032387">
    <property type="entry name" value="ACAS_N"/>
</dbReference>
<dbReference type="InterPro" id="IPR025110">
    <property type="entry name" value="AMP-bd_C"/>
</dbReference>
<dbReference type="InterPro" id="IPR045851">
    <property type="entry name" value="AMP-bd_C_sf"/>
</dbReference>
<dbReference type="InterPro" id="IPR020845">
    <property type="entry name" value="AMP-binding_CS"/>
</dbReference>
<dbReference type="InterPro" id="IPR000873">
    <property type="entry name" value="AMP-dep_synth/lig_dom"/>
</dbReference>
<dbReference type="InterPro" id="IPR042099">
    <property type="entry name" value="ANL_N_sf"/>
</dbReference>
<dbReference type="NCBIfam" id="TIGR02188">
    <property type="entry name" value="Ac_CoA_lig_AcsA"/>
    <property type="match status" value="1"/>
</dbReference>
<dbReference type="NCBIfam" id="NF001208">
    <property type="entry name" value="PRK00174.1"/>
    <property type="match status" value="1"/>
</dbReference>
<dbReference type="PANTHER" id="PTHR24095">
    <property type="entry name" value="ACETYL-COENZYME A SYNTHETASE"/>
    <property type="match status" value="1"/>
</dbReference>
<dbReference type="PANTHER" id="PTHR24095:SF243">
    <property type="entry name" value="ACETYL-COENZYME A SYNTHETASE"/>
    <property type="match status" value="1"/>
</dbReference>
<dbReference type="Pfam" id="PF16177">
    <property type="entry name" value="ACAS_N"/>
    <property type="match status" value="1"/>
</dbReference>
<dbReference type="Pfam" id="PF00501">
    <property type="entry name" value="AMP-binding"/>
    <property type="match status" value="1"/>
</dbReference>
<dbReference type="Pfam" id="PF13193">
    <property type="entry name" value="AMP-binding_C"/>
    <property type="match status" value="1"/>
</dbReference>
<dbReference type="SUPFAM" id="SSF56801">
    <property type="entry name" value="Acetyl-CoA synthetase-like"/>
    <property type="match status" value="1"/>
</dbReference>
<dbReference type="PROSITE" id="PS00455">
    <property type="entry name" value="AMP_BINDING"/>
    <property type="match status" value="1"/>
</dbReference>